<name>RL333_STRPD</name>
<evidence type="ECO:0000255" key="1">
    <source>
        <dbReference type="HAMAP-Rule" id="MF_00294"/>
    </source>
</evidence>
<sequence length="49" mass="5913">MRVNITLEHKESGERLYLTSKNKRNTPDRLQLKKYSPKLRKHVTFTEVK</sequence>
<proteinExistence type="inferred from homology"/>
<organism>
    <name type="scientific">Streptococcus pyogenes serotype M2 (strain MGAS10270)</name>
    <dbReference type="NCBI Taxonomy" id="370552"/>
    <lineage>
        <taxon>Bacteria</taxon>
        <taxon>Bacillati</taxon>
        <taxon>Bacillota</taxon>
        <taxon>Bacilli</taxon>
        <taxon>Lactobacillales</taxon>
        <taxon>Streptococcaceae</taxon>
        <taxon>Streptococcus</taxon>
    </lineage>
</organism>
<feature type="chain" id="PRO_0000356725" description="Large ribosomal subunit protein bL33C">
    <location>
        <begin position="1"/>
        <end position="49"/>
    </location>
</feature>
<protein>
    <recommendedName>
        <fullName evidence="1">Large ribosomal subunit protein bL33C</fullName>
    </recommendedName>
    <alternativeName>
        <fullName evidence="1">50S ribosomal protein L33 3</fullName>
    </alternativeName>
</protein>
<gene>
    <name evidence="1" type="primary">rpmG3</name>
    <name type="ordered locus">MGAS10270_Spy1908</name>
</gene>
<keyword id="KW-0687">Ribonucleoprotein</keyword>
<keyword id="KW-0689">Ribosomal protein</keyword>
<dbReference type="EMBL" id="CP000260">
    <property type="protein sequence ID" value="ABF34973.1"/>
    <property type="molecule type" value="Genomic_DNA"/>
</dbReference>
<dbReference type="SMR" id="Q1JEG0"/>
<dbReference type="KEGG" id="sph:MGAS10270_Spy1908"/>
<dbReference type="HOGENOM" id="CLU_190949_3_2_9"/>
<dbReference type="Proteomes" id="UP000002436">
    <property type="component" value="Chromosome"/>
</dbReference>
<dbReference type="GO" id="GO:0005737">
    <property type="term" value="C:cytoplasm"/>
    <property type="evidence" value="ECO:0007669"/>
    <property type="project" value="UniProtKB-ARBA"/>
</dbReference>
<dbReference type="GO" id="GO:1990904">
    <property type="term" value="C:ribonucleoprotein complex"/>
    <property type="evidence" value="ECO:0007669"/>
    <property type="project" value="UniProtKB-KW"/>
</dbReference>
<dbReference type="GO" id="GO:0005840">
    <property type="term" value="C:ribosome"/>
    <property type="evidence" value="ECO:0007669"/>
    <property type="project" value="UniProtKB-KW"/>
</dbReference>
<dbReference type="GO" id="GO:0003735">
    <property type="term" value="F:structural constituent of ribosome"/>
    <property type="evidence" value="ECO:0007669"/>
    <property type="project" value="InterPro"/>
</dbReference>
<dbReference type="GO" id="GO:0006412">
    <property type="term" value="P:translation"/>
    <property type="evidence" value="ECO:0007669"/>
    <property type="project" value="UniProtKB-UniRule"/>
</dbReference>
<dbReference type="Gene3D" id="2.20.28.120">
    <property type="entry name" value="Ribosomal protein L33"/>
    <property type="match status" value="1"/>
</dbReference>
<dbReference type="HAMAP" id="MF_00294">
    <property type="entry name" value="Ribosomal_bL33"/>
    <property type="match status" value="1"/>
</dbReference>
<dbReference type="InterPro" id="IPR001705">
    <property type="entry name" value="Ribosomal_bL33"/>
</dbReference>
<dbReference type="InterPro" id="IPR018264">
    <property type="entry name" value="Ribosomal_bL33_CS"/>
</dbReference>
<dbReference type="InterPro" id="IPR038584">
    <property type="entry name" value="Ribosomal_bL33_sf"/>
</dbReference>
<dbReference type="InterPro" id="IPR011332">
    <property type="entry name" value="Ribosomal_zn-bd"/>
</dbReference>
<dbReference type="NCBIfam" id="NF001764">
    <property type="entry name" value="PRK00504.1"/>
    <property type="match status" value="1"/>
</dbReference>
<dbReference type="NCBIfam" id="NF001860">
    <property type="entry name" value="PRK00595.1"/>
    <property type="match status" value="1"/>
</dbReference>
<dbReference type="NCBIfam" id="TIGR01023">
    <property type="entry name" value="rpmG_bact"/>
    <property type="match status" value="1"/>
</dbReference>
<dbReference type="PANTHER" id="PTHR43168">
    <property type="entry name" value="50S RIBOSOMAL PROTEIN L33, CHLOROPLASTIC"/>
    <property type="match status" value="1"/>
</dbReference>
<dbReference type="PANTHER" id="PTHR43168:SF2">
    <property type="entry name" value="LARGE RIBOSOMAL SUBUNIT PROTEIN BL33C"/>
    <property type="match status" value="1"/>
</dbReference>
<dbReference type="Pfam" id="PF00471">
    <property type="entry name" value="Ribosomal_L33"/>
    <property type="match status" value="1"/>
</dbReference>
<dbReference type="SUPFAM" id="SSF57829">
    <property type="entry name" value="Zn-binding ribosomal proteins"/>
    <property type="match status" value="1"/>
</dbReference>
<dbReference type="PROSITE" id="PS00582">
    <property type="entry name" value="RIBOSOMAL_L33"/>
    <property type="match status" value="1"/>
</dbReference>
<accession>Q1JEG0</accession>
<comment type="similarity">
    <text evidence="1">Belongs to the bacterial ribosomal protein bL33 family.</text>
</comment>
<reference key="1">
    <citation type="journal article" date="2006" name="Proc. Natl. Acad. Sci. U.S.A.">
        <title>Molecular genetic anatomy of inter- and intraserotype variation in the human bacterial pathogen group A Streptococcus.</title>
        <authorList>
            <person name="Beres S.B."/>
            <person name="Richter E.W."/>
            <person name="Nagiec M.J."/>
            <person name="Sumby P."/>
            <person name="Porcella S.F."/>
            <person name="DeLeo F.R."/>
            <person name="Musser J.M."/>
        </authorList>
    </citation>
    <scope>NUCLEOTIDE SEQUENCE [LARGE SCALE GENOMIC DNA]</scope>
    <source>
        <strain>MGAS10270</strain>
    </source>
</reference>